<feature type="chain" id="PRO_0000281838" description="tRNA wybutosine-synthesizing protein 2 homolog">
    <location>
        <begin position="1"/>
        <end position="446"/>
    </location>
</feature>
<feature type="binding site" evidence="2">
    <location>
        <position position="208"/>
    </location>
    <ligand>
        <name>S-adenosyl-L-methionine</name>
        <dbReference type="ChEBI" id="CHEBI:59789"/>
    </ligand>
</feature>
<feature type="binding site" evidence="2">
    <location>
        <position position="215"/>
    </location>
    <ligand>
        <name>S-adenosyl-L-methionine</name>
        <dbReference type="ChEBI" id="CHEBI:59789"/>
    </ligand>
</feature>
<feature type="binding site" evidence="2">
    <location>
        <position position="255"/>
    </location>
    <ligand>
        <name>S-adenosyl-L-methionine</name>
        <dbReference type="ChEBI" id="CHEBI:59789"/>
    </ligand>
</feature>
<feature type="binding site" evidence="2">
    <location>
        <begin position="283"/>
        <end position="284"/>
    </location>
    <ligand>
        <name>S-adenosyl-L-methionine</name>
        <dbReference type="ChEBI" id="CHEBI:59789"/>
    </ligand>
</feature>
<feature type="sequence conflict" description="In Ref. 2; AAH52533." evidence="3" ref="2">
    <original>L</original>
    <variation>F</variation>
    <location>
        <position position="396"/>
    </location>
</feature>
<feature type="sequence conflict" description="In Ref. 1; BAB31750." evidence="3" ref="1">
    <original>V</original>
    <variation>I</variation>
    <location>
        <position position="425"/>
    </location>
</feature>
<feature type="sequence conflict" description="In Ref. 2; AAH52533/AAH55850." evidence="3" ref="2">
    <original>R</original>
    <variation>Q</variation>
    <location>
        <position position="431"/>
    </location>
</feature>
<organism>
    <name type="scientific">Mus musculus</name>
    <name type="common">Mouse</name>
    <dbReference type="NCBI Taxonomy" id="10090"/>
    <lineage>
        <taxon>Eukaryota</taxon>
        <taxon>Metazoa</taxon>
        <taxon>Chordata</taxon>
        <taxon>Craniata</taxon>
        <taxon>Vertebrata</taxon>
        <taxon>Euteleostomi</taxon>
        <taxon>Mammalia</taxon>
        <taxon>Eutheria</taxon>
        <taxon>Euarchontoglires</taxon>
        <taxon>Glires</taxon>
        <taxon>Rodentia</taxon>
        <taxon>Myomorpha</taxon>
        <taxon>Muroidea</taxon>
        <taxon>Muridae</taxon>
        <taxon>Murinae</taxon>
        <taxon>Mus</taxon>
        <taxon>Mus</taxon>
    </lineage>
</organism>
<dbReference type="EC" id="2.5.1.114"/>
<dbReference type="EMBL" id="AK019481">
    <property type="protein sequence ID" value="BAB31750.1"/>
    <property type="status" value="ALT_FRAME"/>
    <property type="molecule type" value="mRNA"/>
</dbReference>
<dbReference type="EMBL" id="AK031429">
    <property type="protein sequence ID" value="BAC27399.1"/>
    <property type="molecule type" value="mRNA"/>
</dbReference>
<dbReference type="EMBL" id="AK076857">
    <property type="protein sequence ID" value="BAC36508.1"/>
    <property type="molecule type" value="mRNA"/>
</dbReference>
<dbReference type="EMBL" id="AK079291">
    <property type="protein sequence ID" value="BAC37597.1"/>
    <property type="molecule type" value="mRNA"/>
</dbReference>
<dbReference type="EMBL" id="BC052533">
    <property type="protein sequence ID" value="AAH52533.1"/>
    <property type="status" value="ALT_FRAME"/>
    <property type="molecule type" value="mRNA"/>
</dbReference>
<dbReference type="EMBL" id="BC055850">
    <property type="protein sequence ID" value="AAH55850.1"/>
    <property type="molecule type" value="mRNA"/>
</dbReference>
<dbReference type="CCDS" id="CCDS37081.1"/>
<dbReference type="RefSeq" id="NP_080918.2">
    <property type="nucleotide sequence ID" value="NM_026642.2"/>
</dbReference>
<dbReference type="SMR" id="Q8BG71"/>
<dbReference type="FunCoup" id="Q8BG71">
    <property type="interactions" value="933"/>
</dbReference>
<dbReference type="STRING" id="10090.ENSMUSP00000047831"/>
<dbReference type="iPTMnet" id="Q8BG71"/>
<dbReference type="PhosphoSitePlus" id="Q8BG71"/>
<dbReference type="PaxDb" id="10090-ENSMUSP00000047831"/>
<dbReference type="PeptideAtlas" id="Q8BG71"/>
<dbReference type="ProteomicsDB" id="298051"/>
<dbReference type="Antibodypedia" id="13906">
    <property type="antibodies" value="107 antibodies from 19 providers"/>
</dbReference>
<dbReference type="DNASU" id="68260"/>
<dbReference type="Ensembl" id="ENSMUST00000036937.9">
    <property type="protein sequence ID" value="ENSMUSP00000047831.8"/>
    <property type="gene ID" value="ENSMUSG00000037085.9"/>
</dbReference>
<dbReference type="GeneID" id="68260"/>
<dbReference type="KEGG" id="mmu:68260"/>
<dbReference type="UCSC" id="uc007vtp.1">
    <property type="organism name" value="mouse"/>
</dbReference>
<dbReference type="AGR" id="MGI:1915510"/>
<dbReference type="CTD" id="55039"/>
<dbReference type="MGI" id="MGI:1915510">
    <property type="gene designation" value="Trmt12"/>
</dbReference>
<dbReference type="VEuPathDB" id="HostDB:ENSMUSG00000037085"/>
<dbReference type="eggNOG" id="KOG1227">
    <property type="taxonomic scope" value="Eukaryota"/>
</dbReference>
<dbReference type="GeneTree" id="ENSGT00940000153304"/>
<dbReference type="HOGENOM" id="CLU_022610_1_0_1"/>
<dbReference type="InParanoid" id="Q8BG71"/>
<dbReference type="OMA" id="EHSWVKH"/>
<dbReference type="OrthoDB" id="408788at2759"/>
<dbReference type="PhylomeDB" id="Q8BG71"/>
<dbReference type="TreeFam" id="TF314137"/>
<dbReference type="UniPathway" id="UPA00375"/>
<dbReference type="BioGRID-ORCS" id="68260">
    <property type="hits" value="0 hits in 77 CRISPR screens"/>
</dbReference>
<dbReference type="PRO" id="PR:Q8BG71"/>
<dbReference type="Proteomes" id="UP000000589">
    <property type="component" value="Chromosome 15"/>
</dbReference>
<dbReference type="RNAct" id="Q8BG71">
    <property type="molecule type" value="protein"/>
</dbReference>
<dbReference type="Bgee" id="ENSMUSG00000037085">
    <property type="expression patterns" value="Expressed in superior cervical ganglion and 77 other cell types or tissues"/>
</dbReference>
<dbReference type="GO" id="GO:0102522">
    <property type="term" value="F:tRNA 4-demethylwyosine alpha-amino-alpha-carboxypropyltransferase activity"/>
    <property type="evidence" value="ECO:0007669"/>
    <property type="project" value="UniProtKB-EC"/>
</dbReference>
<dbReference type="GO" id="GO:0006400">
    <property type="term" value="P:tRNA modification"/>
    <property type="evidence" value="ECO:0007669"/>
    <property type="project" value="UniProtKB-ARBA"/>
</dbReference>
<dbReference type="CDD" id="cd02440">
    <property type="entry name" value="AdoMet_MTases"/>
    <property type="match status" value="1"/>
</dbReference>
<dbReference type="FunFam" id="3.30.300.110:FF:000002">
    <property type="entry name" value="tRNA wybutosine-synthesizing protein 2 homolog"/>
    <property type="match status" value="1"/>
</dbReference>
<dbReference type="FunFam" id="3.40.50.150:FF:000201">
    <property type="entry name" value="tRNA wybutosine-synthesizing protein 2 homolog"/>
    <property type="match status" value="1"/>
</dbReference>
<dbReference type="Gene3D" id="3.30.300.110">
    <property type="entry name" value="Met-10+ protein-like domains"/>
    <property type="match status" value="1"/>
</dbReference>
<dbReference type="Gene3D" id="3.40.50.150">
    <property type="entry name" value="Vaccinia Virus protein VP39"/>
    <property type="match status" value="1"/>
</dbReference>
<dbReference type="InterPro" id="IPR030382">
    <property type="entry name" value="MeTrfase_TRM5/TYW2"/>
</dbReference>
<dbReference type="InterPro" id="IPR029063">
    <property type="entry name" value="SAM-dependent_MTases_sf"/>
</dbReference>
<dbReference type="InterPro" id="IPR056743">
    <property type="entry name" value="TRM5-TYW2-like_MTfase"/>
</dbReference>
<dbReference type="InterPro" id="IPR056744">
    <property type="entry name" value="TRM5/TYW2-like_N"/>
</dbReference>
<dbReference type="InterPro" id="IPR056745">
    <property type="entry name" value="TYW2_N"/>
</dbReference>
<dbReference type="PANTHER" id="PTHR23245">
    <property type="entry name" value="TRNA METHYLTRANSFERASE"/>
    <property type="match status" value="1"/>
</dbReference>
<dbReference type="PANTHER" id="PTHR23245:SF25">
    <property type="entry name" value="TRNA WYBUTOSINE-SYNTHESIZING PROTEIN 2 HOMOLOG"/>
    <property type="match status" value="1"/>
</dbReference>
<dbReference type="Pfam" id="PF02475">
    <property type="entry name" value="TRM5-TYW2_MTfase"/>
    <property type="match status" value="1"/>
</dbReference>
<dbReference type="Pfam" id="PF25132">
    <property type="entry name" value="TYW2_N"/>
    <property type="match status" value="1"/>
</dbReference>
<dbReference type="Pfam" id="PF25133">
    <property type="entry name" value="TYW2_N_2"/>
    <property type="match status" value="1"/>
</dbReference>
<dbReference type="SUPFAM" id="SSF53335">
    <property type="entry name" value="S-adenosyl-L-methionine-dependent methyltransferases"/>
    <property type="match status" value="1"/>
</dbReference>
<dbReference type="PROSITE" id="PS51684">
    <property type="entry name" value="SAM_MT_TRM5_TYW2"/>
    <property type="match status" value="1"/>
</dbReference>
<protein>
    <recommendedName>
        <fullName>tRNA wybutosine-synthesizing protein 2 homolog</fullName>
        <shortName>tRNA-yW-synthesizing protein 2</shortName>
        <ecNumber>2.5.1.114</ecNumber>
    </recommendedName>
    <alternativeName>
        <fullName>tRNA(Phe) (4-demethylwyosine(37)-C(7)) aminocarboxypropyltransferase</fullName>
    </alternativeName>
</protein>
<sequence length="446" mass="50299">MERECEESVVVAVVTEPRFTQRYRDYLEEQKLLDRLHRVAKLRDGAVALPVLAESLSEQHLQELRDRVAPGSTCVLTRLPDPLPSKKARVRSPAQILCLEVRRWVEDRGVTWSAELEADLPRSWQRHGDLMLLSEDCFQATLWKGLEPELWETVASALGVQRLAKRGRVLPDGTRTPSVTLLLGDHGWVEHMDNGIRYKFDVTQCMFSFGNITEKLRVASLSCAGEVLVDLYAGIGYFTLPFLVHAGAAFVHACEWNPHAVVALRNNLEINGVADRCQIHFGDNRKLKLSDIADRVNLGLIPSSKEGWPVACQVLRKDVGGILHIHQNVESFSGKTPQPPGSNNVEKEHWPRPQKITTDTQGNGTTENFRGEISSANKPEWWRWAESAETQIASLLHQVHGKPWRTRILHVHPVKSYAPHVDHIVLDLECRPLTSSWPEGVDLLTQ</sequence>
<name>TYW2_MOUSE</name>
<accession>Q8BG71</accession>
<accession>Q0P5W5</accession>
<accession>Q7TNQ8</accession>
<accession>Q9D2N1</accession>
<reference key="1">
    <citation type="journal article" date="2005" name="Science">
        <title>The transcriptional landscape of the mammalian genome.</title>
        <authorList>
            <person name="Carninci P."/>
            <person name="Kasukawa T."/>
            <person name="Katayama S."/>
            <person name="Gough J."/>
            <person name="Frith M.C."/>
            <person name="Maeda N."/>
            <person name="Oyama R."/>
            <person name="Ravasi T."/>
            <person name="Lenhard B."/>
            <person name="Wells C."/>
            <person name="Kodzius R."/>
            <person name="Shimokawa K."/>
            <person name="Bajic V.B."/>
            <person name="Brenner S.E."/>
            <person name="Batalov S."/>
            <person name="Forrest A.R."/>
            <person name="Zavolan M."/>
            <person name="Davis M.J."/>
            <person name="Wilming L.G."/>
            <person name="Aidinis V."/>
            <person name="Allen J.E."/>
            <person name="Ambesi-Impiombato A."/>
            <person name="Apweiler R."/>
            <person name="Aturaliya R.N."/>
            <person name="Bailey T.L."/>
            <person name="Bansal M."/>
            <person name="Baxter L."/>
            <person name="Beisel K.W."/>
            <person name="Bersano T."/>
            <person name="Bono H."/>
            <person name="Chalk A.M."/>
            <person name="Chiu K.P."/>
            <person name="Choudhary V."/>
            <person name="Christoffels A."/>
            <person name="Clutterbuck D.R."/>
            <person name="Crowe M.L."/>
            <person name="Dalla E."/>
            <person name="Dalrymple B.P."/>
            <person name="de Bono B."/>
            <person name="Della Gatta G."/>
            <person name="di Bernardo D."/>
            <person name="Down T."/>
            <person name="Engstrom P."/>
            <person name="Fagiolini M."/>
            <person name="Faulkner G."/>
            <person name="Fletcher C.F."/>
            <person name="Fukushima T."/>
            <person name="Furuno M."/>
            <person name="Futaki S."/>
            <person name="Gariboldi M."/>
            <person name="Georgii-Hemming P."/>
            <person name="Gingeras T.R."/>
            <person name="Gojobori T."/>
            <person name="Green R.E."/>
            <person name="Gustincich S."/>
            <person name="Harbers M."/>
            <person name="Hayashi Y."/>
            <person name="Hensch T.K."/>
            <person name="Hirokawa N."/>
            <person name="Hill D."/>
            <person name="Huminiecki L."/>
            <person name="Iacono M."/>
            <person name="Ikeo K."/>
            <person name="Iwama A."/>
            <person name="Ishikawa T."/>
            <person name="Jakt M."/>
            <person name="Kanapin A."/>
            <person name="Katoh M."/>
            <person name="Kawasawa Y."/>
            <person name="Kelso J."/>
            <person name="Kitamura H."/>
            <person name="Kitano H."/>
            <person name="Kollias G."/>
            <person name="Krishnan S.P."/>
            <person name="Kruger A."/>
            <person name="Kummerfeld S.K."/>
            <person name="Kurochkin I.V."/>
            <person name="Lareau L.F."/>
            <person name="Lazarevic D."/>
            <person name="Lipovich L."/>
            <person name="Liu J."/>
            <person name="Liuni S."/>
            <person name="McWilliam S."/>
            <person name="Madan Babu M."/>
            <person name="Madera M."/>
            <person name="Marchionni L."/>
            <person name="Matsuda H."/>
            <person name="Matsuzawa S."/>
            <person name="Miki H."/>
            <person name="Mignone F."/>
            <person name="Miyake S."/>
            <person name="Morris K."/>
            <person name="Mottagui-Tabar S."/>
            <person name="Mulder N."/>
            <person name="Nakano N."/>
            <person name="Nakauchi H."/>
            <person name="Ng P."/>
            <person name="Nilsson R."/>
            <person name="Nishiguchi S."/>
            <person name="Nishikawa S."/>
            <person name="Nori F."/>
            <person name="Ohara O."/>
            <person name="Okazaki Y."/>
            <person name="Orlando V."/>
            <person name="Pang K.C."/>
            <person name="Pavan W.J."/>
            <person name="Pavesi G."/>
            <person name="Pesole G."/>
            <person name="Petrovsky N."/>
            <person name="Piazza S."/>
            <person name="Reed J."/>
            <person name="Reid J.F."/>
            <person name="Ring B.Z."/>
            <person name="Ringwald M."/>
            <person name="Rost B."/>
            <person name="Ruan Y."/>
            <person name="Salzberg S.L."/>
            <person name="Sandelin A."/>
            <person name="Schneider C."/>
            <person name="Schoenbach C."/>
            <person name="Sekiguchi K."/>
            <person name="Semple C.A."/>
            <person name="Seno S."/>
            <person name="Sessa L."/>
            <person name="Sheng Y."/>
            <person name="Shibata Y."/>
            <person name="Shimada H."/>
            <person name="Shimada K."/>
            <person name="Silva D."/>
            <person name="Sinclair B."/>
            <person name="Sperling S."/>
            <person name="Stupka E."/>
            <person name="Sugiura K."/>
            <person name="Sultana R."/>
            <person name="Takenaka Y."/>
            <person name="Taki K."/>
            <person name="Tammoja K."/>
            <person name="Tan S.L."/>
            <person name="Tang S."/>
            <person name="Taylor M.S."/>
            <person name="Tegner J."/>
            <person name="Teichmann S.A."/>
            <person name="Ueda H.R."/>
            <person name="van Nimwegen E."/>
            <person name="Verardo R."/>
            <person name="Wei C.L."/>
            <person name="Yagi K."/>
            <person name="Yamanishi H."/>
            <person name="Zabarovsky E."/>
            <person name="Zhu S."/>
            <person name="Zimmer A."/>
            <person name="Hide W."/>
            <person name="Bult C."/>
            <person name="Grimmond S.M."/>
            <person name="Teasdale R.D."/>
            <person name="Liu E.T."/>
            <person name="Brusic V."/>
            <person name="Quackenbush J."/>
            <person name="Wahlestedt C."/>
            <person name="Mattick J.S."/>
            <person name="Hume D.A."/>
            <person name="Kai C."/>
            <person name="Sasaki D."/>
            <person name="Tomaru Y."/>
            <person name="Fukuda S."/>
            <person name="Kanamori-Katayama M."/>
            <person name="Suzuki M."/>
            <person name="Aoki J."/>
            <person name="Arakawa T."/>
            <person name="Iida J."/>
            <person name="Imamura K."/>
            <person name="Itoh M."/>
            <person name="Kato T."/>
            <person name="Kawaji H."/>
            <person name="Kawagashira N."/>
            <person name="Kawashima T."/>
            <person name="Kojima M."/>
            <person name="Kondo S."/>
            <person name="Konno H."/>
            <person name="Nakano K."/>
            <person name="Ninomiya N."/>
            <person name="Nishio T."/>
            <person name="Okada M."/>
            <person name="Plessy C."/>
            <person name="Shibata K."/>
            <person name="Shiraki T."/>
            <person name="Suzuki S."/>
            <person name="Tagami M."/>
            <person name="Waki K."/>
            <person name="Watahiki A."/>
            <person name="Okamura-Oho Y."/>
            <person name="Suzuki H."/>
            <person name="Kawai J."/>
            <person name="Hayashizaki Y."/>
        </authorList>
    </citation>
    <scope>NUCLEOTIDE SEQUENCE [LARGE SCALE MRNA]</scope>
    <source>
        <strain>C57BL/6J</strain>
        <tissue>Skin</tissue>
        <tissue>Testis</tissue>
        <tissue>Urinary bladder</tissue>
    </source>
</reference>
<reference key="2">
    <citation type="journal article" date="2004" name="Genome Res.">
        <title>The status, quality, and expansion of the NIH full-length cDNA project: the Mammalian Gene Collection (MGC).</title>
        <authorList>
            <consortium name="The MGC Project Team"/>
        </authorList>
    </citation>
    <scope>NUCLEOTIDE SEQUENCE [LARGE SCALE MRNA]</scope>
    <source>
        <strain>Czech II</strain>
        <strain>FVB/N</strain>
        <tissue>Lung</tissue>
        <tissue>Salivary gland</tissue>
    </source>
</reference>
<gene>
    <name type="primary">Trmt12</name>
    <name type="synonym">Tyw2</name>
</gene>
<evidence type="ECO:0000250" key="1"/>
<evidence type="ECO:0000255" key="2">
    <source>
        <dbReference type="PROSITE-ProRule" id="PRU01021"/>
    </source>
</evidence>
<evidence type="ECO:0000305" key="3"/>
<comment type="function">
    <text evidence="1">S-adenosyl-L-methionine-dependent transferase that acts as a component of the wybutosine biosynthesis pathway. Wybutosine is a hyper modified guanosine with a tricyclic base found at the 3'-position adjacent to the anticodon of eukaryotic phenylalanine tRNA. Catalyzes the transfer of the alpha-amino-alpha-carboxypropyl (acp) group from S-adenosyl-L-methionine to the C-7 position of 4-demethylwyosine (imG-14) to produce wybutosine-86 (By similarity).</text>
</comment>
<comment type="catalytic activity">
    <reaction>
        <text>4-demethylwyosine(37) in tRNA(Phe) + S-adenosyl-L-methionine = 4-demethyl-7-[(3S)-3-amino-3-carboxypropyl]wyosine(37) in tRNA(Phe) + S-methyl-5'-thioadenosine + H(+)</text>
        <dbReference type="Rhea" id="RHEA:36355"/>
        <dbReference type="Rhea" id="RHEA-COMP:10164"/>
        <dbReference type="Rhea" id="RHEA-COMP:10378"/>
        <dbReference type="ChEBI" id="CHEBI:15378"/>
        <dbReference type="ChEBI" id="CHEBI:17509"/>
        <dbReference type="ChEBI" id="CHEBI:59789"/>
        <dbReference type="ChEBI" id="CHEBI:64315"/>
        <dbReference type="ChEBI" id="CHEBI:73550"/>
        <dbReference type="EC" id="2.5.1.114"/>
    </reaction>
</comment>
<comment type="pathway">
    <text>tRNA modification; wybutosine-tRNA(Phe) biosynthesis.</text>
</comment>
<comment type="similarity">
    <text evidence="2">Belongs to the class I-like SAM-binding methyltransferase superfamily. TRM5/TYW2 family.</text>
</comment>
<comment type="sequence caution" evidence="3">
    <conflict type="frameshift">
        <sequence resource="EMBL-CDS" id="AAH52533"/>
    </conflict>
</comment>
<comment type="sequence caution" evidence="3">
    <conflict type="frameshift">
        <sequence resource="EMBL-CDS" id="BAB31750"/>
    </conflict>
</comment>
<keyword id="KW-1185">Reference proteome</keyword>
<keyword id="KW-0949">S-adenosyl-L-methionine</keyword>
<keyword id="KW-0808">Transferase</keyword>
<keyword id="KW-0819">tRNA processing</keyword>
<proteinExistence type="evidence at transcript level"/>